<reference key="1">
    <citation type="journal article" date="2001" name="Nature">
        <title>Complete genome sequence of Salmonella enterica serovar Typhimurium LT2.</title>
        <authorList>
            <person name="McClelland M."/>
            <person name="Sanderson K.E."/>
            <person name="Spieth J."/>
            <person name="Clifton S.W."/>
            <person name="Latreille P."/>
            <person name="Courtney L."/>
            <person name="Porwollik S."/>
            <person name="Ali J."/>
            <person name="Dante M."/>
            <person name="Du F."/>
            <person name="Hou S."/>
            <person name="Layman D."/>
            <person name="Leonard S."/>
            <person name="Nguyen C."/>
            <person name="Scott K."/>
            <person name="Holmes A."/>
            <person name="Grewal N."/>
            <person name="Mulvaney E."/>
            <person name="Ryan E."/>
            <person name="Sun H."/>
            <person name="Florea L."/>
            <person name="Miller W."/>
            <person name="Stoneking T."/>
            <person name="Nhan M."/>
            <person name="Waterston R."/>
            <person name="Wilson R.K."/>
        </authorList>
    </citation>
    <scope>NUCLEOTIDE SEQUENCE [LARGE SCALE GENOMIC DNA]</scope>
    <source>
        <strain>LT2 / SGSC1412 / ATCC 700720</strain>
    </source>
</reference>
<organism>
    <name type="scientific">Salmonella typhimurium (strain LT2 / SGSC1412 / ATCC 700720)</name>
    <dbReference type="NCBI Taxonomy" id="99287"/>
    <lineage>
        <taxon>Bacteria</taxon>
        <taxon>Pseudomonadati</taxon>
        <taxon>Pseudomonadota</taxon>
        <taxon>Gammaproteobacteria</taxon>
        <taxon>Enterobacterales</taxon>
        <taxon>Enterobacteriaceae</taxon>
        <taxon>Salmonella</taxon>
    </lineage>
</organism>
<accession>Q8ZKA8</accession>
<feature type="chain" id="PRO_0000416079" description="Epoxyqueuosine reductase">
    <location>
        <begin position="1"/>
        <end position="384"/>
    </location>
</feature>
<feature type="domain" description="4Fe-4S ferredoxin-type" evidence="1">
    <location>
        <begin position="186"/>
        <end position="218"/>
    </location>
</feature>
<feature type="active site" description="Proton donor" evidence="1">
    <location>
        <position position="144"/>
    </location>
</feature>
<feature type="binding site" evidence="1">
    <location>
        <position position="198"/>
    </location>
    <ligand>
        <name>[4Fe-4S] cluster</name>
        <dbReference type="ChEBI" id="CHEBI:49883"/>
        <label>1</label>
    </ligand>
</feature>
<feature type="binding site" evidence="1">
    <location>
        <position position="201"/>
    </location>
    <ligand>
        <name>[4Fe-4S] cluster</name>
        <dbReference type="ChEBI" id="CHEBI:49883"/>
        <label>1</label>
    </ligand>
</feature>
<feature type="binding site" evidence="1">
    <location>
        <position position="204"/>
    </location>
    <ligand>
        <name>[4Fe-4S] cluster</name>
        <dbReference type="ChEBI" id="CHEBI:49883"/>
        <label>1</label>
    </ligand>
</feature>
<feature type="binding site" evidence="1">
    <location>
        <position position="208"/>
    </location>
    <ligand>
        <name>[4Fe-4S] cluster</name>
        <dbReference type="ChEBI" id="CHEBI:49883"/>
        <label>2</label>
    </ligand>
</feature>
<feature type="binding site" evidence="1">
    <location>
        <position position="224"/>
    </location>
    <ligand>
        <name>[4Fe-4S] cluster</name>
        <dbReference type="ChEBI" id="CHEBI:49883"/>
        <label>2</label>
    </ligand>
</feature>
<feature type="binding site" evidence="1">
    <location>
        <position position="251"/>
    </location>
    <ligand>
        <name>[4Fe-4S] cluster</name>
        <dbReference type="ChEBI" id="CHEBI:49883"/>
        <label>2</label>
    </ligand>
</feature>
<feature type="binding site" evidence="1">
    <location>
        <position position="254"/>
    </location>
    <ligand>
        <name>[4Fe-4S] cluster</name>
        <dbReference type="ChEBI" id="CHEBI:49883"/>
        <label>2</label>
    </ligand>
</feature>
<feature type="binding site" evidence="1">
    <location>
        <position position="258"/>
    </location>
    <ligand>
        <name>[4Fe-4S] cluster</name>
        <dbReference type="ChEBI" id="CHEBI:49883"/>
        <label>1</label>
    </ligand>
</feature>
<gene>
    <name evidence="1" type="primary">queG</name>
    <name type="ordered locus">STM4355</name>
</gene>
<dbReference type="EC" id="1.17.99.6" evidence="1"/>
<dbReference type="EMBL" id="AE006468">
    <property type="protein sequence ID" value="AAL23175.1"/>
    <property type="molecule type" value="Genomic_DNA"/>
</dbReference>
<dbReference type="RefSeq" id="WP_000964745.1">
    <property type="nucleotide sequence ID" value="NC_003197.2"/>
</dbReference>
<dbReference type="SMR" id="Q8ZKA8"/>
<dbReference type="STRING" id="99287.STM4355"/>
<dbReference type="PaxDb" id="99287-STM4355"/>
<dbReference type="KEGG" id="stm:STM4355"/>
<dbReference type="HOGENOM" id="CLU_030790_0_1_6"/>
<dbReference type="PhylomeDB" id="Q8ZKA8"/>
<dbReference type="BioCyc" id="SENT99287:STM4355-MONOMER"/>
<dbReference type="UniPathway" id="UPA00392"/>
<dbReference type="Proteomes" id="UP000001014">
    <property type="component" value="Chromosome"/>
</dbReference>
<dbReference type="GO" id="GO:0005737">
    <property type="term" value="C:cytoplasm"/>
    <property type="evidence" value="ECO:0007669"/>
    <property type="project" value="UniProtKB-SubCell"/>
</dbReference>
<dbReference type="GO" id="GO:0051539">
    <property type="term" value="F:4 iron, 4 sulfur cluster binding"/>
    <property type="evidence" value="ECO:0007669"/>
    <property type="project" value="UniProtKB-KW"/>
</dbReference>
<dbReference type="GO" id="GO:0052693">
    <property type="term" value="F:epoxyqueuosine reductase activity"/>
    <property type="evidence" value="ECO:0000318"/>
    <property type="project" value="GO_Central"/>
</dbReference>
<dbReference type="GO" id="GO:0046872">
    <property type="term" value="F:metal ion binding"/>
    <property type="evidence" value="ECO:0007669"/>
    <property type="project" value="UniProtKB-KW"/>
</dbReference>
<dbReference type="GO" id="GO:0008616">
    <property type="term" value="P:queuosine biosynthetic process"/>
    <property type="evidence" value="ECO:0000318"/>
    <property type="project" value="GO_Central"/>
</dbReference>
<dbReference type="GO" id="GO:0006400">
    <property type="term" value="P:tRNA modification"/>
    <property type="evidence" value="ECO:0007669"/>
    <property type="project" value="UniProtKB-UniRule"/>
</dbReference>
<dbReference type="FunFam" id="3.30.70.20:FF:000017">
    <property type="entry name" value="Epoxyqueuosine reductase"/>
    <property type="match status" value="1"/>
</dbReference>
<dbReference type="Gene3D" id="3.30.70.20">
    <property type="match status" value="1"/>
</dbReference>
<dbReference type="HAMAP" id="MF_00916">
    <property type="entry name" value="QueG"/>
    <property type="match status" value="1"/>
</dbReference>
<dbReference type="InterPro" id="IPR017896">
    <property type="entry name" value="4Fe4S_Fe-S-bd"/>
</dbReference>
<dbReference type="InterPro" id="IPR017900">
    <property type="entry name" value="4Fe4S_Fe_S_CS"/>
</dbReference>
<dbReference type="InterPro" id="IPR004453">
    <property type="entry name" value="QueG"/>
</dbReference>
<dbReference type="InterPro" id="IPR013542">
    <property type="entry name" value="QueG_DUF1730"/>
</dbReference>
<dbReference type="NCBIfam" id="TIGR00276">
    <property type="entry name" value="tRNA epoxyqueuosine(34) reductase QueG"/>
    <property type="match status" value="1"/>
</dbReference>
<dbReference type="PANTHER" id="PTHR30002">
    <property type="entry name" value="EPOXYQUEUOSINE REDUCTASE"/>
    <property type="match status" value="1"/>
</dbReference>
<dbReference type="PANTHER" id="PTHR30002:SF4">
    <property type="entry name" value="EPOXYQUEUOSINE REDUCTASE"/>
    <property type="match status" value="1"/>
</dbReference>
<dbReference type="Pfam" id="PF13484">
    <property type="entry name" value="Fer4_16"/>
    <property type="match status" value="1"/>
</dbReference>
<dbReference type="Pfam" id="PF08331">
    <property type="entry name" value="QueG_DUF1730"/>
    <property type="match status" value="1"/>
</dbReference>
<dbReference type="SUPFAM" id="SSF54862">
    <property type="entry name" value="4Fe-4S ferredoxins"/>
    <property type="match status" value="1"/>
</dbReference>
<dbReference type="PROSITE" id="PS00198">
    <property type="entry name" value="4FE4S_FER_1"/>
    <property type="match status" value="1"/>
</dbReference>
<dbReference type="PROSITE" id="PS51379">
    <property type="entry name" value="4FE4S_FER_2"/>
    <property type="match status" value="1"/>
</dbReference>
<comment type="function">
    <text evidence="1">Catalyzes the conversion of epoxyqueuosine (oQ) to queuosine (Q), which is a hypermodified base found in the wobble positions of tRNA(Asp), tRNA(Asn), tRNA(His) and tRNA(Tyr).</text>
</comment>
<comment type="catalytic activity">
    <reaction evidence="1">
        <text>epoxyqueuosine(34) in tRNA + AH2 = queuosine(34) in tRNA + A + H2O</text>
        <dbReference type="Rhea" id="RHEA:32159"/>
        <dbReference type="Rhea" id="RHEA-COMP:18571"/>
        <dbReference type="Rhea" id="RHEA-COMP:18582"/>
        <dbReference type="ChEBI" id="CHEBI:13193"/>
        <dbReference type="ChEBI" id="CHEBI:15377"/>
        <dbReference type="ChEBI" id="CHEBI:17499"/>
        <dbReference type="ChEBI" id="CHEBI:194431"/>
        <dbReference type="ChEBI" id="CHEBI:194443"/>
        <dbReference type="EC" id="1.17.99.6"/>
    </reaction>
</comment>
<comment type="cofactor">
    <cofactor evidence="1">
        <name>cob(II)alamin</name>
        <dbReference type="ChEBI" id="CHEBI:16304"/>
    </cofactor>
</comment>
<comment type="cofactor">
    <cofactor evidence="1">
        <name>[4Fe-4S] cluster</name>
        <dbReference type="ChEBI" id="CHEBI:49883"/>
    </cofactor>
    <text evidence="1">Binds 2 [4Fe-4S] clusters per monomer.</text>
</comment>
<comment type="pathway">
    <text evidence="1">tRNA modification; tRNA-queuosine biosynthesis.</text>
</comment>
<comment type="subunit">
    <text evidence="1">Monomer.</text>
</comment>
<comment type="subcellular location">
    <subcellularLocation>
        <location evidence="1">Cytoplasm</location>
    </subcellularLocation>
</comment>
<comment type="similarity">
    <text evidence="1">Belongs to the QueG family.</text>
</comment>
<keyword id="KW-0004">4Fe-4S</keyword>
<keyword id="KW-0963">Cytoplasm</keyword>
<keyword id="KW-0408">Iron</keyword>
<keyword id="KW-0411">Iron-sulfur</keyword>
<keyword id="KW-0479">Metal-binding</keyword>
<keyword id="KW-0560">Oxidoreductase</keyword>
<keyword id="KW-0671">Queuosine biosynthesis</keyword>
<keyword id="KW-1185">Reference proteome</keyword>
<keyword id="KW-0819">tRNA processing</keyword>
<evidence type="ECO:0000255" key="1">
    <source>
        <dbReference type="HAMAP-Rule" id="MF_00916"/>
    </source>
</evidence>
<sequence>MLWSIMSKPLDLNQLAQNIKQWGLELGFQQVGITDTDLRASEPALQAWLDKQYHGEMAWMARHGMMRARPHELLPGTLRVISVRMNYLPANAAFASTLKDPTLGYVSRYALGRDYHKLLRSRLKKLGEQIQQYCGSLNFRPFVDSAPILERPLAEKAGLGWTGKHSLILNREAGSFFFLGELLIDLPLPVDQPVEEGCGKCVACMTICPTGAIVEPYTVDARRCISYLTIELEGAIPEAFRPLIGNRIYGCDDCQLICPWNRYSQLTDEADFSPRKALHNPDLLELFSWSEAQFLKVTEGSAIRRIGHLRWLRNVAVALGNAPWSNAVITALESRKGEHPLLDEHIEWAIAQQIEKRNACIIEVQLPKKQRLVRVIEKGLVRDA</sequence>
<proteinExistence type="inferred from homology"/>
<name>QUEG_SALTY</name>
<protein>
    <recommendedName>
        <fullName evidence="1">Epoxyqueuosine reductase</fullName>
        <ecNumber evidence="1">1.17.99.6</ecNumber>
    </recommendedName>
    <alternativeName>
        <fullName evidence="1">Queuosine biosynthesis protein QueG</fullName>
    </alternativeName>
</protein>